<organism>
    <name type="scientific">Shewanella piezotolerans (strain WP3 / JCM 13877)</name>
    <dbReference type="NCBI Taxonomy" id="225849"/>
    <lineage>
        <taxon>Bacteria</taxon>
        <taxon>Pseudomonadati</taxon>
        <taxon>Pseudomonadota</taxon>
        <taxon>Gammaproteobacteria</taxon>
        <taxon>Alteromonadales</taxon>
        <taxon>Shewanellaceae</taxon>
        <taxon>Shewanella</taxon>
    </lineage>
</organism>
<gene>
    <name evidence="1" type="primary">rpsO</name>
    <name type="ordered locus">swp_1221</name>
</gene>
<comment type="function">
    <text evidence="1">One of the primary rRNA binding proteins, it binds directly to 16S rRNA where it helps nucleate assembly of the platform of the 30S subunit by binding and bridging several RNA helices of the 16S rRNA.</text>
</comment>
<comment type="function">
    <text evidence="1">Forms an intersubunit bridge (bridge B4) with the 23S rRNA of the 50S subunit in the ribosome.</text>
</comment>
<comment type="subunit">
    <text evidence="1">Part of the 30S ribosomal subunit. Forms a bridge to the 50S subunit in the 70S ribosome, contacting the 23S rRNA.</text>
</comment>
<comment type="similarity">
    <text evidence="1">Belongs to the universal ribosomal protein uS15 family.</text>
</comment>
<sequence>MSLSVEAKAKILAEFGRCENDTGSSEVQVALLTAQINHLQGHFKEHIHDHHSRRGLLRMVSTRRKLLAYLKRTENVRYQELIKKLGLRR</sequence>
<feature type="chain" id="PRO_1000143170" description="Small ribosomal subunit protein uS15">
    <location>
        <begin position="1"/>
        <end position="89"/>
    </location>
</feature>
<protein>
    <recommendedName>
        <fullName evidence="1">Small ribosomal subunit protein uS15</fullName>
    </recommendedName>
    <alternativeName>
        <fullName evidence="2">30S ribosomal protein S15</fullName>
    </alternativeName>
</protein>
<evidence type="ECO:0000255" key="1">
    <source>
        <dbReference type="HAMAP-Rule" id="MF_01343"/>
    </source>
</evidence>
<evidence type="ECO:0000305" key="2"/>
<dbReference type="EMBL" id="CP000472">
    <property type="protein sequence ID" value="ACJ28015.1"/>
    <property type="molecule type" value="Genomic_DNA"/>
</dbReference>
<dbReference type="RefSeq" id="WP_020911393.1">
    <property type="nucleotide sequence ID" value="NC_011566.1"/>
</dbReference>
<dbReference type="SMR" id="B8CKH6"/>
<dbReference type="STRING" id="225849.swp_1221"/>
<dbReference type="KEGG" id="swp:swp_1221"/>
<dbReference type="eggNOG" id="COG0184">
    <property type="taxonomic scope" value="Bacteria"/>
</dbReference>
<dbReference type="HOGENOM" id="CLU_148518_0_0_6"/>
<dbReference type="OrthoDB" id="9799262at2"/>
<dbReference type="Proteomes" id="UP000000753">
    <property type="component" value="Chromosome"/>
</dbReference>
<dbReference type="GO" id="GO:0022627">
    <property type="term" value="C:cytosolic small ribosomal subunit"/>
    <property type="evidence" value="ECO:0007669"/>
    <property type="project" value="TreeGrafter"/>
</dbReference>
<dbReference type="GO" id="GO:0019843">
    <property type="term" value="F:rRNA binding"/>
    <property type="evidence" value="ECO:0007669"/>
    <property type="project" value="UniProtKB-UniRule"/>
</dbReference>
<dbReference type="GO" id="GO:0003735">
    <property type="term" value="F:structural constituent of ribosome"/>
    <property type="evidence" value="ECO:0007669"/>
    <property type="project" value="InterPro"/>
</dbReference>
<dbReference type="GO" id="GO:0006412">
    <property type="term" value="P:translation"/>
    <property type="evidence" value="ECO:0007669"/>
    <property type="project" value="UniProtKB-UniRule"/>
</dbReference>
<dbReference type="CDD" id="cd00353">
    <property type="entry name" value="Ribosomal_S15p_S13e"/>
    <property type="match status" value="1"/>
</dbReference>
<dbReference type="FunFam" id="1.10.287.10:FF:000002">
    <property type="entry name" value="30S ribosomal protein S15"/>
    <property type="match status" value="1"/>
</dbReference>
<dbReference type="Gene3D" id="6.10.250.3130">
    <property type="match status" value="1"/>
</dbReference>
<dbReference type="Gene3D" id="1.10.287.10">
    <property type="entry name" value="S15/NS1, RNA-binding"/>
    <property type="match status" value="1"/>
</dbReference>
<dbReference type="HAMAP" id="MF_01343_B">
    <property type="entry name" value="Ribosomal_uS15_B"/>
    <property type="match status" value="1"/>
</dbReference>
<dbReference type="InterPro" id="IPR000589">
    <property type="entry name" value="Ribosomal_uS15"/>
</dbReference>
<dbReference type="InterPro" id="IPR005290">
    <property type="entry name" value="Ribosomal_uS15_bac-type"/>
</dbReference>
<dbReference type="InterPro" id="IPR009068">
    <property type="entry name" value="uS15_NS1_RNA-bd_sf"/>
</dbReference>
<dbReference type="NCBIfam" id="TIGR00952">
    <property type="entry name" value="S15_bact"/>
    <property type="match status" value="1"/>
</dbReference>
<dbReference type="PANTHER" id="PTHR23321">
    <property type="entry name" value="RIBOSOMAL PROTEIN S15, BACTERIAL AND ORGANELLAR"/>
    <property type="match status" value="1"/>
</dbReference>
<dbReference type="PANTHER" id="PTHR23321:SF26">
    <property type="entry name" value="SMALL RIBOSOMAL SUBUNIT PROTEIN US15M"/>
    <property type="match status" value="1"/>
</dbReference>
<dbReference type="Pfam" id="PF00312">
    <property type="entry name" value="Ribosomal_S15"/>
    <property type="match status" value="1"/>
</dbReference>
<dbReference type="SMART" id="SM01387">
    <property type="entry name" value="Ribosomal_S15"/>
    <property type="match status" value="1"/>
</dbReference>
<dbReference type="SUPFAM" id="SSF47060">
    <property type="entry name" value="S15/NS1 RNA-binding domain"/>
    <property type="match status" value="1"/>
</dbReference>
<dbReference type="PROSITE" id="PS00362">
    <property type="entry name" value="RIBOSOMAL_S15"/>
    <property type="match status" value="1"/>
</dbReference>
<reference key="1">
    <citation type="journal article" date="2008" name="PLoS ONE">
        <title>Environmental adaptation: genomic analysis of the piezotolerant and psychrotolerant deep-sea iron reducing bacterium Shewanella piezotolerans WP3.</title>
        <authorList>
            <person name="Wang F."/>
            <person name="Wang J."/>
            <person name="Jian H."/>
            <person name="Zhang B."/>
            <person name="Li S."/>
            <person name="Wang F."/>
            <person name="Zeng X."/>
            <person name="Gao L."/>
            <person name="Bartlett D.H."/>
            <person name="Yu J."/>
            <person name="Hu S."/>
            <person name="Xiao X."/>
        </authorList>
    </citation>
    <scope>NUCLEOTIDE SEQUENCE [LARGE SCALE GENOMIC DNA]</scope>
    <source>
        <strain>WP3 / JCM 13877</strain>
    </source>
</reference>
<proteinExistence type="inferred from homology"/>
<accession>B8CKH6</accession>
<name>RS15_SHEPW</name>
<keyword id="KW-0687">Ribonucleoprotein</keyword>
<keyword id="KW-0689">Ribosomal protein</keyword>
<keyword id="KW-0694">RNA-binding</keyword>
<keyword id="KW-0699">rRNA-binding</keyword>